<comment type="subcellular location">
    <subcellularLocation>
        <location evidence="1">Cell membrane</location>
        <topology evidence="1">Multi-pass membrane protein</topology>
    </subcellularLocation>
</comment>
<comment type="similarity">
    <text evidence="1">Belongs to the AAE transporter (TC 2.A.81) family. YbjL subfamily.</text>
</comment>
<dbReference type="EMBL" id="CP001138">
    <property type="protein sequence ID" value="ACH52988.1"/>
    <property type="molecule type" value="Genomic_DNA"/>
</dbReference>
<dbReference type="RefSeq" id="WP_001024853.1">
    <property type="nucleotide sequence ID" value="NC_011149.1"/>
</dbReference>
<dbReference type="SMR" id="B5F0Y9"/>
<dbReference type="KEGG" id="sea:SeAg_B0907"/>
<dbReference type="HOGENOM" id="CLU_035023_2_2_6"/>
<dbReference type="Proteomes" id="UP000008819">
    <property type="component" value="Chromosome"/>
</dbReference>
<dbReference type="GO" id="GO:0005886">
    <property type="term" value="C:plasma membrane"/>
    <property type="evidence" value="ECO:0007669"/>
    <property type="project" value="UniProtKB-SubCell"/>
</dbReference>
<dbReference type="GO" id="GO:0008324">
    <property type="term" value="F:monoatomic cation transmembrane transporter activity"/>
    <property type="evidence" value="ECO:0007669"/>
    <property type="project" value="InterPro"/>
</dbReference>
<dbReference type="GO" id="GO:0006813">
    <property type="term" value="P:potassium ion transport"/>
    <property type="evidence" value="ECO:0007669"/>
    <property type="project" value="InterPro"/>
</dbReference>
<dbReference type="FunFam" id="3.30.70.1450:FF:000003">
    <property type="entry name" value="Putative transport protein YbjL"/>
    <property type="match status" value="1"/>
</dbReference>
<dbReference type="Gene3D" id="3.30.70.1450">
    <property type="entry name" value="Regulator of K+ conductance, C-terminal domain"/>
    <property type="match status" value="1"/>
</dbReference>
<dbReference type="HAMAP" id="MF_01015">
    <property type="entry name" value="YbjL"/>
    <property type="match status" value="1"/>
</dbReference>
<dbReference type="InterPro" id="IPR050144">
    <property type="entry name" value="AAE_transporter"/>
</dbReference>
<dbReference type="InterPro" id="IPR006037">
    <property type="entry name" value="RCK_C"/>
</dbReference>
<dbReference type="InterPro" id="IPR036721">
    <property type="entry name" value="RCK_C_sf"/>
</dbReference>
<dbReference type="InterPro" id="IPR023017">
    <property type="entry name" value="Transp_YbjL_put"/>
</dbReference>
<dbReference type="InterPro" id="IPR006512">
    <property type="entry name" value="YidE_YbjL"/>
</dbReference>
<dbReference type="NCBIfam" id="NF003440">
    <property type="entry name" value="PRK04972.1"/>
    <property type="match status" value="1"/>
</dbReference>
<dbReference type="NCBIfam" id="TIGR01625">
    <property type="entry name" value="YidE_YbjL_dupl"/>
    <property type="match status" value="2"/>
</dbReference>
<dbReference type="PANTHER" id="PTHR30445">
    <property type="entry name" value="K(+)_H(+) ANTIPORTER SUBUNIT KHTT"/>
    <property type="match status" value="1"/>
</dbReference>
<dbReference type="PANTHER" id="PTHR30445:SF10">
    <property type="entry name" value="TRANSPORT PROTEIN YBJL-RELATED"/>
    <property type="match status" value="1"/>
</dbReference>
<dbReference type="Pfam" id="PF06826">
    <property type="entry name" value="Asp-Al_Ex"/>
    <property type="match status" value="2"/>
</dbReference>
<dbReference type="Pfam" id="PF02080">
    <property type="entry name" value="TrkA_C"/>
    <property type="match status" value="2"/>
</dbReference>
<dbReference type="SUPFAM" id="SSF116726">
    <property type="entry name" value="TrkA C-terminal domain-like"/>
    <property type="match status" value="2"/>
</dbReference>
<dbReference type="PROSITE" id="PS51202">
    <property type="entry name" value="RCK_C"/>
    <property type="match status" value="2"/>
</dbReference>
<evidence type="ECO:0000255" key="1">
    <source>
        <dbReference type="HAMAP-Rule" id="MF_01015"/>
    </source>
</evidence>
<accession>B5F0Y9</accession>
<gene>
    <name evidence="1" type="primary">ybjL</name>
    <name type="ordered locus">SeAg_B0907</name>
</gene>
<sequence length="561" mass="60181">MNINVADLLNGNYILLLFVVLALGLCLGKLRLGSVQLGNSIGVLVVSLLLGQQHFSINTDALNLGFMLFIFCVGVEAGPNFFSIFFRDGKNYLMLALVMVGSALLIALGLGKLFGWDIGLTAGMLAGSMTSTPVLVGAGDTLRHSGIASTQLSSALDNLSLGYALTYLIGLVSLIVGARYLPKLQHQDLQTSAQQIARERGLDTDANRKVYLPVIRAYRVGPELVAWTDGKNLRELGIYRQTGCYIERIRRNGILANPDGDAVLQMGDEIALVGYPDAHARLDPSFRNGKEVFDRDLLDMRIVTEEIVVKNHNAVGRRLAQLKLTDHGCFLNRVIRSQIEMPIDDNVVLNKGDVLQVSGDARRVKTIADRIGFISIHSQVTDLLAFCAFFIIGLMIGMITFQFSNFSFGIGNAAGLLFAGIMLGFLRANHPTFGYIPQGALNMVKEFGLMVFMAGVGLSAGSGISNGLGAVGGQMLIAGLVVSLVPVVICFLFGAYVLRMNRALLFGAMMGARTCAPAMEIISDTARSNIPALGYAGTYAIANVLLTLAGTLIVIIWPGLG</sequence>
<name>YBJL_SALA4</name>
<protein>
    <recommendedName>
        <fullName evidence="1">Putative transport protein YbjL</fullName>
    </recommendedName>
</protein>
<reference key="1">
    <citation type="journal article" date="2011" name="J. Bacteriol.">
        <title>Comparative genomics of 28 Salmonella enterica isolates: evidence for CRISPR-mediated adaptive sublineage evolution.</title>
        <authorList>
            <person name="Fricke W.F."/>
            <person name="Mammel M.K."/>
            <person name="McDermott P.F."/>
            <person name="Tartera C."/>
            <person name="White D.G."/>
            <person name="Leclerc J.E."/>
            <person name="Ravel J."/>
            <person name="Cebula T.A."/>
        </authorList>
    </citation>
    <scope>NUCLEOTIDE SEQUENCE [LARGE SCALE GENOMIC DNA]</scope>
    <source>
        <strain>SL483</strain>
    </source>
</reference>
<proteinExistence type="inferred from homology"/>
<keyword id="KW-1003">Cell membrane</keyword>
<keyword id="KW-0472">Membrane</keyword>
<keyword id="KW-0677">Repeat</keyword>
<keyword id="KW-0812">Transmembrane</keyword>
<keyword id="KW-1133">Transmembrane helix</keyword>
<keyword id="KW-0813">Transport</keyword>
<feature type="chain" id="PRO_1000135189" description="Putative transport protein YbjL">
    <location>
        <begin position="1"/>
        <end position="561"/>
    </location>
</feature>
<feature type="transmembrane region" description="Helical" evidence="1">
    <location>
        <begin position="8"/>
        <end position="28"/>
    </location>
</feature>
<feature type="transmembrane region" description="Helical" evidence="1">
    <location>
        <begin position="32"/>
        <end position="52"/>
    </location>
</feature>
<feature type="transmembrane region" description="Helical" evidence="1">
    <location>
        <begin position="66"/>
        <end position="86"/>
    </location>
</feature>
<feature type="transmembrane region" description="Helical" evidence="1">
    <location>
        <begin position="94"/>
        <end position="114"/>
    </location>
</feature>
<feature type="transmembrane region" description="Helical" evidence="1">
    <location>
        <begin position="158"/>
        <end position="178"/>
    </location>
</feature>
<feature type="transmembrane region" description="Helical" evidence="1">
    <location>
        <begin position="383"/>
        <end position="403"/>
    </location>
</feature>
<feature type="transmembrane region" description="Helical" evidence="1">
    <location>
        <begin position="406"/>
        <end position="426"/>
    </location>
</feature>
<feature type="transmembrane region" description="Helical" evidence="1">
    <location>
        <begin position="447"/>
        <end position="467"/>
    </location>
</feature>
<feature type="transmembrane region" description="Helical" evidence="1">
    <location>
        <begin position="475"/>
        <end position="495"/>
    </location>
</feature>
<feature type="transmembrane region" description="Helical" evidence="1">
    <location>
        <begin position="540"/>
        <end position="560"/>
    </location>
</feature>
<feature type="domain" description="RCK C-terminal 1" evidence="1">
    <location>
        <begin position="200"/>
        <end position="288"/>
    </location>
</feature>
<feature type="domain" description="RCK C-terminal 2" evidence="1">
    <location>
        <begin position="292"/>
        <end position="373"/>
    </location>
</feature>
<organism>
    <name type="scientific">Salmonella agona (strain SL483)</name>
    <dbReference type="NCBI Taxonomy" id="454166"/>
    <lineage>
        <taxon>Bacteria</taxon>
        <taxon>Pseudomonadati</taxon>
        <taxon>Pseudomonadota</taxon>
        <taxon>Gammaproteobacteria</taxon>
        <taxon>Enterobacterales</taxon>
        <taxon>Enterobacteriaceae</taxon>
        <taxon>Salmonella</taxon>
    </lineage>
</organism>